<protein>
    <recommendedName>
        <fullName evidence="1">Photosystem II reaction center protein I</fullName>
        <shortName evidence="1">PSII-I</shortName>
    </recommendedName>
    <alternativeName>
        <fullName evidence="1">PSII 4.8 kDa protein</fullName>
    </alternativeName>
</protein>
<accession>Q0G9N5</accession>
<organism>
    <name type="scientific">Liriodendron tulipifera</name>
    <name type="common">Tuliptree</name>
    <name type="synonym">Tulip poplar</name>
    <dbReference type="NCBI Taxonomy" id="3415"/>
    <lineage>
        <taxon>Eukaryota</taxon>
        <taxon>Viridiplantae</taxon>
        <taxon>Streptophyta</taxon>
        <taxon>Embryophyta</taxon>
        <taxon>Tracheophyta</taxon>
        <taxon>Spermatophyta</taxon>
        <taxon>Magnoliopsida</taxon>
        <taxon>Magnoliidae</taxon>
        <taxon>Magnoliales</taxon>
        <taxon>Magnoliaceae</taxon>
        <taxon>Liriodendron</taxon>
    </lineage>
</organism>
<keyword id="KW-0150">Chloroplast</keyword>
<keyword id="KW-0472">Membrane</keyword>
<keyword id="KW-0602">Photosynthesis</keyword>
<keyword id="KW-0604">Photosystem II</keyword>
<keyword id="KW-0934">Plastid</keyword>
<keyword id="KW-0674">Reaction center</keyword>
<keyword id="KW-0793">Thylakoid</keyword>
<keyword id="KW-0812">Transmembrane</keyword>
<keyword id="KW-1133">Transmembrane helix</keyword>
<comment type="function">
    <text evidence="1">One of the components of the core complex of photosystem II (PSII), required for its stability and/or assembly. PSII is a light-driven water:plastoquinone oxidoreductase that uses light energy to abstract electrons from H(2)O, generating O(2) and a proton gradient subsequently used for ATP formation. It consists of a core antenna complex that captures photons, and an electron transfer chain that converts photonic excitation into a charge separation.</text>
</comment>
<comment type="subunit">
    <text evidence="1">PSII is composed of 1 copy each of membrane proteins PsbA, PsbB, PsbC, PsbD, PsbE, PsbF, PsbH, PsbI, PsbJ, PsbK, PsbL, PsbM, PsbT, PsbX, PsbY, PsbZ, Psb30/Ycf12, at least 3 peripheral proteins of the oxygen-evolving complex and a large number of cofactors. It forms dimeric complexes.</text>
</comment>
<comment type="subcellular location">
    <subcellularLocation>
        <location evidence="1">Plastid</location>
        <location evidence="1">Chloroplast thylakoid membrane</location>
        <topology evidence="1">Single-pass membrane protein</topology>
    </subcellularLocation>
</comment>
<comment type="similarity">
    <text evidence="1">Belongs to the PsbI family.</text>
</comment>
<comment type="sequence caution" evidence="2">
    <conflict type="erroneous initiation">
        <sequence resource="EMBL-CDS" id="ABI32493"/>
    </conflict>
    <text>Extended N-terminus.</text>
</comment>
<gene>
    <name evidence="1" type="primary">psbI</name>
</gene>
<evidence type="ECO:0000255" key="1">
    <source>
        <dbReference type="HAMAP-Rule" id="MF_01316"/>
    </source>
</evidence>
<evidence type="ECO:0000305" key="2"/>
<dbReference type="EMBL" id="DQ899947">
    <property type="protein sequence ID" value="ABI32493.1"/>
    <property type="status" value="ALT_INIT"/>
    <property type="molecule type" value="Genomic_DNA"/>
</dbReference>
<dbReference type="RefSeq" id="YP_740186.1">
    <property type="nucleotide sequence ID" value="NC_008326.1"/>
</dbReference>
<dbReference type="SMR" id="Q0G9N5"/>
<dbReference type="GeneID" id="4266586"/>
<dbReference type="GO" id="GO:0009535">
    <property type="term" value="C:chloroplast thylakoid membrane"/>
    <property type="evidence" value="ECO:0007669"/>
    <property type="project" value="UniProtKB-SubCell"/>
</dbReference>
<dbReference type="GO" id="GO:0009539">
    <property type="term" value="C:photosystem II reaction center"/>
    <property type="evidence" value="ECO:0007669"/>
    <property type="project" value="InterPro"/>
</dbReference>
<dbReference type="GO" id="GO:0015979">
    <property type="term" value="P:photosynthesis"/>
    <property type="evidence" value="ECO:0007669"/>
    <property type="project" value="UniProtKB-UniRule"/>
</dbReference>
<dbReference type="HAMAP" id="MF_01316">
    <property type="entry name" value="PSII_PsbI"/>
    <property type="match status" value="1"/>
</dbReference>
<dbReference type="InterPro" id="IPR003686">
    <property type="entry name" value="PSII_PsbI"/>
</dbReference>
<dbReference type="InterPro" id="IPR037271">
    <property type="entry name" value="PSII_PsbI_sf"/>
</dbReference>
<dbReference type="NCBIfam" id="NF002735">
    <property type="entry name" value="PRK02655.1"/>
    <property type="match status" value="1"/>
</dbReference>
<dbReference type="PANTHER" id="PTHR35772">
    <property type="entry name" value="PHOTOSYSTEM II REACTION CENTER PROTEIN I"/>
    <property type="match status" value="1"/>
</dbReference>
<dbReference type="PANTHER" id="PTHR35772:SF1">
    <property type="entry name" value="PHOTOSYSTEM II REACTION CENTER PROTEIN I"/>
    <property type="match status" value="1"/>
</dbReference>
<dbReference type="Pfam" id="PF02532">
    <property type="entry name" value="PsbI"/>
    <property type="match status" value="1"/>
</dbReference>
<dbReference type="SUPFAM" id="SSF161041">
    <property type="entry name" value="Photosystem II reaction center protein I, PsbI"/>
    <property type="match status" value="1"/>
</dbReference>
<sequence>MLTLKLFVYTVVIFFVSLFIFGFLSNDPGRNPGREE</sequence>
<feature type="chain" id="PRO_0000275797" description="Photosystem II reaction center protein I">
    <location>
        <begin position="1"/>
        <end position="36"/>
    </location>
</feature>
<feature type="transmembrane region" description="Helical" evidence="1">
    <location>
        <begin position="4"/>
        <end position="24"/>
    </location>
</feature>
<reference key="1">
    <citation type="journal article" date="2006" name="BMC Evol. Biol.">
        <title>Complete plastid genome sequences of Drimys, Liriodendron, and Piper: implications for the phylogenetic relationships of magnoliids.</title>
        <authorList>
            <person name="Cai Z."/>
            <person name="Penaflor C."/>
            <person name="Kuehl J.V."/>
            <person name="Leebens-Mack J."/>
            <person name="Carlson J.E."/>
            <person name="dePamphilis C.W."/>
            <person name="Boore J.L."/>
            <person name="Jansen R.K."/>
        </authorList>
    </citation>
    <scope>NUCLEOTIDE SEQUENCE [LARGE SCALE GENOMIC DNA]</scope>
</reference>
<proteinExistence type="inferred from homology"/>
<geneLocation type="chloroplast"/>
<name>PSBI_LIRTU</name>